<sequence length="79" mass="9148">MSRLRNSAQLQLSKKESLGDNGGALNTTRSSRQKQGKYGFTRKCGRLVKEQRARFYIMRRCVVMLICWTDHNNNNSDHS</sequence>
<proteinExistence type="inferred from homology"/>
<gene>
    <name evidence="5" type="primary">DVL8</name>
    <name evidence="6" type="synonym">RTFL7</name>
    <name evidence="9" type="ordered locus">At3g55515</name>
    <name evidence="10" type="ORF">T22E16</name>
</gene>
<feature type="chain" id="PRO_0000452776" description="Small polypeptide DEVIL 8">
    <location>
        <begin position="1"/>
        <end position="79"/>
    </location>
</feature>
<feature type="transmembrane region" description="Helical" evidence="2">
    <location>
        <begin position="55"/>
        <end position="71"/>
    </location>
</feature>
<feature type="region of interest" description="Disordered" evidence="4">
    <location>
        <begin position="1"/>
        <end position="37"/>
    </location>
</feature>
<feature type="region of interest" description="Required for DVL/RTFL small polypeptide activity" evidence="1">
    <location>
        <begin position="39"/>
        <end position="70"/>
    </location>
</feature>
<feature type="compositionally biased region" description="Polar residues" evidence="4">
    <location>
        <begin position="1"/>
        <end position="12"/>
    </location>
</feature>
<feature type="glycosylation site" description="N-linked (GlcNAc...) asparagine" evidence="3">
    <location>
        <position position="26"/>
    </location>
</feature>
<feature type="glycosylation site" description="N-linked (GlcNAc...) asparagine" evidence="3">
    <location>
        <position position="74"/>
    </location>
</feature>
<protein>
    <recommendedName>
        <fullName evidence="5">Small polypeptide DEVIL 8</fullName>
    </recommendedName>
    <alternativeName>
        <fullName evidence="6">Small polypeptide ROTUNDIFOLIA LIKE 7</fullName>
        <shortName evidence="6">Small polypeptide ROT-FOUR-LIKE 7</shortName>
    </alternativeName>
</protein>
<organism>
    <name type="scientific">Arabidopsis thaliana</name>
    <name type="common">Mouse-ear cress</name>
    <dbReference type="NCBI Taxonomy" id="3702"/>
    <lineage>
        <taxon>Eukaryota</taxon>
        <taxon>Viridiplantae</taxon>
        <taxon>Streptophyta</taxon>
        <taxon>Embryophyta</taxon>
        <taxon>Tracheophyta</taxon>
        <taxon>Spermatophyta</taxon>
        <taxon>Magnoliopsida</taxon>
        <taxon>eudicotyledons</taxon>
        <taxon>Gunneridae</taxon>
        <taxon>Pentapetalae</taxon>
        <taxon>rosids</taxon>
        <taxon>malvids</taxon>
        <taxon>Brassicales</taxon>
        <taxon>Brassicaceae</taxon>
        <taxon>Camelineae</taxon>
        <taxon>Arabidopsis</taxon>
    </lineage>
</organism>
<accession>Q6IM93</accession>
<accession>A0A178VBG8</accession>
<keyword id="KW-1003">Cell membrane</keyword>
<keyword id="KW-0217">Developmental protein</keyword>
<keyword id="KW-0325">Glycoprotein</keyword>
<keyword id="KW-0472">Membrane</keyword>
<keyword id="KW-1185">Reference proteome</keyword>
<keyword id="KW-0812">Transmembrane</keyword>
<keyword id="KW-1133">Transmembrane helix</keyword>
<name>DVL8_ARATH</name>
<comment type="function">
    <text evidence="7">Small polypeptide acting as a regulatory molecule which coordinates cellular responses required for differentiation, growth and development, probably by restricting polar cell proliferation in lateral organs and coordinating socket cell recruitment and differentiation at trichome sites.</text>
</comment>
<comment type="subcellular location">
    <subcellularLocation>
        <location evidence="1">Cell membrane</location>
        <topology evidence="2">Single-pass membrane protein</topology>
    </subcellularLocation>
</comment>
<comment type="similarity">
    <text evidence="8">Belongs to the DVL/RTFL small polypeptides family.</text>
</comment>
<evidence type="ECO:0000250" key="1">
    <source>
        <dbReference type="UniProtKB" id="Q7XXN8"/>
    </source>
</evidence>
<evidence type="ECO:0000255" key="2"/>
<evidence type="ECO:0000255" key="3">
    <source>
        <dbReference type="PROSITE-ProRule" id="PRU00498"/>
    </source>
</evidence>
<evidence type="ECO:0000256" key="4">
    <source>
        <dbReference type="SAM" id="MobiDB-lite"/>
    </source>
</evidence>
<evidence type="ECO:0000303" key="5">
    <source>
    </source>
</evidence>
<evidence type="ECO:0000303" key="6">
    <source>
    </source>
</evidence>
<evidence type="ECO:0000303" key="7">
    <source>
    </source>
</evidence>
<evidence type="ECO:0000305" key="8"/>
<evidence type="ECO:0000312" key="9">
    <source>
        <dbReference type="Araport" id="AT3G55515"/>
    </source>
</evidence>
<evidence type="ECO:0000312" key="10">
    <source>
        <dbReference type="EMBL" id="AL132975"/>
    </source>
</evidence>
<dbReference type="EMBL" id="BK001751">
    <property type="protein sequence ID" value="DAA02279.1"/>
    <property type="molecule type" value="Genomic_DNA"/>
</dbReference>
<dbReference type="EMBL" id="AL132975">
    <property type="status" value="NOT_ANNOTATED_CDS"/>
    <property type="molecule type" value="Genomic_DNA"/>
</dbReference>
<dbReference type="EMBL" id="CP002686">
    <property type="protein sequence ID" value="AEE79395.1"/>
    <property type="molecule type" value="Genomic_DNA"/>
</dbReference>
<dbReference type="RefSeq" id="NP_001319758.1">
    <property type="nucleotide sequence ID" value="NM_001339732.1"/>
</dbReference>
<dbReference type="STRING" id="3702.Q6IM93"/>
<dbReference type="GlyCosmos" id="Q6IM93">
    <property type="glycosylation" value="2 sites, No reported glycans"/>
</dbReference>
<dbReference type="GlyGen" id="Q6IM93">
    <property type="glycosylation" value="2 sites"/>
</dbReference>
<dbReference type="PaxDb" id="3702-AT3G55515.1"/>
<dbReference type="EnsemblPlants" id="AT3G55515.1">
    <property type="protein sequence ID" value="AT3G55515.1"/>
    <property type="gene ID" value="AT3G55515"/>
</dbReference>
<dbReference type="GeneID" id="28719406"/>
<dbReference type="Gramene" id="AT3G55515.1">
    <property type="protein sequence ID" value="AT3G55515.1"/>
    <property type="gene ID" value="AT3G55515"/>
</dbReference>
<dbReference type="KEGG" id="ath:AT3G55515"/>
<dbReference type="Araport" id="AT3G55515"/>
<dbReference type="TAIR" id="AT3G55515">
    <property type="gene designation" value="RTFL7"/>
</dbReference>
<dbReference type="HOGENOM" id="CLU_150897_1_1_1"/>
<dbReference type="InParanoid" id="Q6IM93"/>
<dbReference type="PhylomeDB" id="Q6IM93"/>
<dbReference type="PRO" id="PR:Q6IM93"/>
<dbReference type="Proteomes" id="UP000006548">
    <property type="component" value="Chromosome 3"/>
</dbReference>
<dbReference type="ExpressionAtlas" id="Q6IM93">
    <property type="expression patterns" value="baseline and differential"/>
</dbReference>
<dbReference type="GO" id="GO:0005886">
    <property type="term" value="C:plasma membrane"/>
    <property type="evidence" value="ECO:0000250"/>
    <property type="project" value="UniProtKB"/>
</dbReference>
<dbReference type="GO" id="GO:0008285">
    <property type="term" value="P:negative regulation of cell population proliferation"/>
    <property type="evidence" value="ECO:0000250"/>
    <property type="project" value="UniProtKB"/>
</dbReference>
<dbReference type="GO" id="GO:0048367">
    <property type="term" value="P:shoot system development"/>
    <property type="evidence" value="ECO:0000250"/>
    <property type="project" value="TAIR"/>
</dbReference>
<dbReference type="InterPro" id="IPR012552">
    <property type="entry name" value="DVL"/>
</dbReference>
<dbReference type="InterPro" id="IPR051525">
    <property type="entry name" value="DVL_RTFL_regulatory"/>
</dbReference>
<dbReference type="PANTHER" id="PTHR33102">
    <property type="entry name" value="DVL19-RELATED-RELATED"/>
    <property type="match status" value="1"/>
</dbReference>
<dbReference type="Pfam" id="PF08137">
    <property type="entry name" value="DVL"/>
    <property type="match status" value="1"/>
</dbReference>
<reference key="1">
    <citation type="journal article" date="2004" name="Plant J.">
        <title>DVL, a novel class of small polypeptides: overexpression alters Arabidopsis development.</title>
        <authorList>
            <person name="Wen J."/>
            <person name="Lease K.A."/>
            <person name="Walker J.C."/>
        </authorList>
    </citation>
    <scope>NUCLEOTIDE SEQUENCE [GENOMIC DNA]</scope>
    <scope>GENE FAMILY</scope>
    <scope>NOMENCLATURE</scope>
    <source>
        <strain>cv. Columbia</strain>
    </source>
</reference>
<reference key="2">
    <citation type="journal article" date="2000" name="Nature">
        <title>Sequence and analysis of chromosome 3 of the plant Arabidopsis thaliana.</title>
        <authorList>
            <person name="Salanoubat M."/>
            <person name="Lemcke K."/>
            <person name="Rieger M."/>
            <person name="Ansorge W."/>
            <person name="Unseld M."/>
            <person name="Fartmann B."/>
            <person name="Valle G."/>
            <person name="Bloecker H."/>
            <person name="Perez-Alonso M."/>
            <person name="Obermaier B."/>
            <person name="Delseny M."/>
            <person name="Boutry M."/>
            <person name="Grivell L.A."/>
            <person name="Mache R."/>
            <person name="Puigdomenech P."/>
            <person name="De Simone V."/>
            <person name="Choisne N."/>
            <person name="Artiguenave F."/>
            <person name="Robert C."/>
            <person name="Brottier P."/>
            <person name="Wincker P."/>
            <person name="Cattolico L."/>
            <person name="Weissenbach J."/>
            <person name="Saurin W."/>
            <person name="Quetier F."/>
            <person name="Schaefer M."/>
            <person name="Mueller-Auer S."/>
            <person name="Gabel C."/>
            <person name="Fuchs M."/>
            <person name="Benes V."/>
            <person name="Wurmbach E."/>
            <person name="Drzonek H."/>
            <person name="Erfle H."/>
            <person name="Jordan N."/>
            <person name="Bangert S."/>
            <person name="Wiedelmann R."/>
            <person name="Kranz H."/>
            <person name="Voss H."/>
            <person name="Holland R."/>
            <person name="Brandt P."/>
            <person name="Nyakatura G."/>
            <person name="Vezzi A."/>
            <person name="D'Angelo M."/>
            <person name="Pallavicini A."/>
            <person name="Toppo S."/>
            <person name="Simionati B."/>
            <person name="Conrad A."/>
            <person name="Hornischer K."/>
            <person name="Kauer G."/>
            <person name="Loehnert T.-H."/>
            <person name="Nordsiek G."/>
            <person name="Reichelt J."/>
            <person name="Scharfe M."/>
            <person name="Schoen O."/>
            <person name="Bargues M."/>
            <person name="Terol J."/>
            <person name="Climent J."/>
            <person name="Navarro P."/>
            <person name="Collado C."/>
            <person name="Perez-Perez A."/>
            <person name="Ottenwaelder B."/>
            <person name="Duchemin D."/>
            <person name="Cooke R."/>
            <person name="Laudie M."/>
            <person name="Berger-Llauro C."/>
            <person name="Purnelle B."/>
            <person name="Masuy D."/>
            <person name="de Haan M."/>
            <person name="Maarse A.C."/>
            <person name="Alcaraz J.-P."/>
            <person name="Cottet A."/>
            <person name="Casacuberta E."/>
            <person name="Monfort A."/>
            <person name="Argiriou A."/>
            <person name="Flores M."/>
            <person name="Liguori R."/>
            <person name="Vitale D."/>
            <person name="Mannhaupt G."/>
            <person name="Haase D."/>
            <person name="Schoof H."/>
            <person name="Rudd S."/>
            <person name="Zaccaria P."/>
            <person name="Mewes H.-W."/>
            <person name="Mayer K.F.X."/>
            <person name="Kaul S."/>
            <person name="Town C.D."/>
            <person name="Koo H.L."/>
            <person name="Tallon L.J."/>
            <person name="Jenkins J."/>
            <person name="Rooney T."/>
            <person name="Rizzo M."/>
            <person name="Walts A."/>
            <person name="Utterback T."/>
            <person name="Fujii C.Y."/>
            <person name="Shea T.P."/>
            <person name="Creasy T.H."/>
            <person name="Haas B."/>
            <person name="Maiti R."/>
            <person name="Wu D."/>
            <person name="Peterson J."/>
            <person name="Van Aken S."/>
            <person name="Pai G."/>
            <person name="Militscher J."/>
            <person name="Sellers P."/>
            <person name="Gill J.E."/>
            <person name="Feldblyum T.V."/>
            <person name="Preuss D."/>
            <person name="Lin X."/>
            <person name="Nierman W.C."/>
            <person name="Salzberg S.L."/>
            <person name="White O."/>
            <person name="Venter J.C."/>
            <person name="Fraser C.M."/>
            <person name="Kaneko T."/>
            <person name="Nakamura Y."/>
            <person name="Sato S."/>
            <person name="Kato T."/>
            <person name="Asamizu E."/>
            <person name="Sasamoto S."/>
            <person name="Kimura T."/>
            <person name="Idesawa K."/>
            <person name="Kawashima K."/>
            <person name="Kishida Y."/>
            <person name="Kiyokawa C."/>
            <person name="Kohara M."/>
            <person name="Matsumoto M."/>
            <person name="Matsuno A."/>
            <person name="Muraki A."/>
            <person name="Nakayama S."/>
            <person name="Nakazaki N."/>
            <person name="Shinpo S."/>
            <person name="Takeuchi C."/>
            <person name="Wada T."/>
            <person name="Watanabe A."/>
            <person name="Yamada M."/>
            <person name="Yasuda M."/>
            <person name="Tabata S."/>
        </authorList>
    </citation>
    <scope>NUCLEOTIDE SEQUENCE [LARGE SCALE GENOMIC DNA]</scope>
    <source>
        <strain>cv. Columbia</strain>
    </source>
</reference>
<reference key="3">
    <citation type="journal article" date="2017" name="Plant J.">
        <title>Araport11: a complete reannotation of the Arabidopsis thaliana reference genome.</title>
        <authorList>
            <person name="Cheng C.Y."/>
            <person name="Krishnakumar V."/>
            <person name="Chan A.P."/>
            <person name="Thibaud-Nissen F."/>
            <person name="Schobel S."/>
            <person name="Town C.D."/>
        </authorList>
    </citation>
    <scope>GENOME REANNOTATION</scope>
    <source>
        <strain>cv. Columbia</strain>
    </source>
</reference>
<reference key="4">
    <citation type="journal article" date="2004" name="Plant J.">
        <title>Overexpression of a novel small peptide ROTUNDIFOLIA4 decreases cell proliferation and alters leaf shape in Arabidopsis thaliana.</title>
        <authorList>
            <person name="Narita N.N."/>
            <person name="Moore S."/>
            <person name="Horiguchi G."/>
            <person name="Kubo M."/>
            <person name="Demura T."/>
            <person name="Fukuda H."/>
            <person name="Goodrich J."/>
            <person name="Tsukaya H."/>
        </authorList>
    </citation>
    <scope>GENE FAMILY</scope>
    <source>
        <strain>cv. Columbia</strain>
        <strain>cv. Landsberg erecta</strain>
    </source>
</reference>
<reference key="5">
    <citation type="journal article" date="2012" name="J. Exp. Bot.">
        <title>DVL genes play a role in the coordination of socket cell recruitment and differentiation.</title>
        <authorList>
            <person name="Valdivia E.R."/>
            <person name="Chevalier D."/>
            <person name="Sampedro J."/>
            <person name="Taylor I."/>
            <person name="Niederhuth C.E."/>
            <person name="Walker J.C."/>
        </authorList>
    </citation>
    <scope>FUNCTION</scope>
    <source>
        <strain>cv. Columbia</strain>
    </source>
</reference>
<reference key="6">
    <citation type="journal article" date="2015" name="J. Plant Res.">
        <title>Comparative analysis of the RTFL peptide family on the control of plant organogenesis.</title>
        <authorList>
            <person name="Guo P."/>
            <person name="Yoshimura A."/>
            <person name="Ishikawa N."/>
            <person name="Yamaguchi T."/>
            <person name="Guo Y."/>
            <person name="Tsukaya H."/>
        </authorList>
    </citation>
    <scope>REVIEW</scope>
    <scope>GENE FAMILY</scope>
    <scope>NOMENCLATURE</scope>
    <source>
        <strain>cv. Columbia</strain>
    </source>
</reference>